<keyword id="KW-0001">2Fe-2S</keyword>
<keyword id="KW-0274">FAD</keyword>
<keyword id="KW-0285">Flavoprotein</keyword>
<keyword id="KW-0408">Iron</keyword>
<keyword id="KW-0411">Iron-sulfur</keyword>
<keyword id="KW-0479">Metal-binding</keyword>
<keyword id="KW-0560">Oxidoreductase</keyword>
<organism>
    <name type="scientific">Gordonia sp. (strain TY-5)</name>
    <dbReference type="NCBI Taxonomy" id="235467"/>
    <lineage>
        <taxon>Bacteria</taxon>
        <taxon>Bacillati</taxon>
        <taxon>Actinomycetota</taxon>
        <taxon>Actinomycetes</taxon>
        <taxon>Mycobacteriales</taxon>
        <taxon>Gordoniaceae</taxon>
        <taxon>Gordonia</taxon>
    </lineage>
</organism>
<feature type="chain" id="PRO_0000442968" description="Propane 2-monooxygenase, reductase component">
    <location>
        <begin position="1"/>
        <end position="346"/>
    </location>
</feature>
<feature type="domain" description="2Fe-2S ferredoxin-type" evidence="2">
    <location>
        <begin position="5"/>
        <end position="94"/>
    </location>
</feature>
<feature type="domain" description="FAD-binding FR-type" evidence="3">
    <location>
        <begin position="104"/>
        <end position="205"/>
    </location>
</feature>
<feature type="binding site" evidence="2">
    <location>
        <position position="39"/>
    </location>
    <ligand>
        <name>[2Fe-2S] cluster</name>
        <dbReference type="ChEBI" id="CHEBI:190135"/>
    </ligand>
</feature>
<feature type="binding site" evidence="2">
    <location>
        <position position="44"/>
    </location>
    <ligand>
        <name>[2Fe-2S] cluster</name>
        <dbReference type="ChEBI" id="CHEBI:190135"/>
    </ligand>
</feature>
<feature type="binding site" evidence="2">
    <location>
        <position position="46"/>
    </location>
    <ligand>
        <name>[2Fe-2S] cluster</name>
        <dbReference type="ChEBI" id="CHEBI:190135"/>
    </ligand>
</feature>
<feature type="binding site" evidence="2">
    <location>
        <position position="78"/>
    </location>
    <ligand>
        <name>[2Fe-2S] cluster</name>
        <dbReference type="ChEBI" id="CHEBI:190135"/>
    </ligand>
</feature>
<sequence length="346" mass="37719">MADTHKISFEPVDIEMEVGEDETILDAAFRQGIHLMHGCREGRCSCKSYMLEGDVQMDDYSTFACNDAEEAEGYVLLCRTYAYSDCEIELLNFDEDELLGGAPIQDVTTKVAAIEPMTPDIVSLKLDVVEPESVEFKSGQYFDLFIPGTEDKRSFSIATTPATPDRLEFLIKKYPGGLFAGMLTDGLSVGQEIKLNGPYGSCTLRNGHVLPIVAIGGGAGMAPLLSLLRHISETGLNRPVRFYYGARTAADLFLLDEIATLGEKIDDFSFTACLSESTDNAPEGVTVIGGNVTDIVNDNEADLARTEVYFCAPPPMVDAALALAEQHSVPHDQIFYDKFTSPAFDS</sequence>
<reference key="1">
    <citation type="journal article" date="2003" name="J. Bacteriol.">
        <title>Propane monooxygenase and NAD+-dependent secondary alcohol dehydrogenase in propane metabolism by Gordonia sp. strain TY-5.</title>
        <authorList>
            <person name="Kotani T."/>
            <person name="Yamamoto T."/>
            <person name="Yurimoto H."/>
            <person name="Sakai Y."/>
            <person name="Kato N."/>
        </authorList>
    </citation>
    <scope>NUCLEOTIDE SEQUENCE [GENOMIC DNA]</scope>
    <scope>FUNCTION</scope>
    <scope>INDUCTION BY PROPANE</scope>
    <scope>DISRUPTION PHENOTYPE</scope>
    <scope>SUBUNIT</scope>
    <source>
        <strain evidence="9">TY-5</strain>
    </source>
</reference>
<reference key="2">
    <citation type="journal article" date="2011" name="Appl. Environ. Microbiol.">
        <title>Identification of the monooxygenase gene clusters responsible for the regioselective oxidation of phenol to hydroquinone in mycobacteria.</title>
        <authorList>
            <person name="Furuya T."/>
            <person name="Hirose S."/>
            <person name="Osanai H."/>
            <person name="Semba H."/>
            <person name="Kino K."/>
        </authorList>
    </citation>
    <scope>DISRUPTION PHENOTYPE</scope>
    <scope>INDUCTION BY ACETONE</scope>
    <source>
        <strain>TY-5</strain>
    </source>
</reference>
<comment type="function">
    <text evidence="4">Reductase component of the propane 2-monooxygenase multicomponent enzyme system which is involved in the degradation of propane via the O2-dependent hydroxylation of propane (PubMed:14645271). Reductase catalyzes the transfer of electrons from NADH or NADPH to monooxygenase (Probable).</text>
</comment>
<comment type="cofactor">
    <cofactor evidence="1">
        <name>FAD</name>
        <dbReference type="ChEBI" id="CHEBI:57692"/>
    </cofactor>
</comment>
<comment type="cofactor">
    <cofactor evidence="2">
        <name>[2Fe-2S] cluster</name>
        <dbReference type="ChEBI" id="CHEBI:190135"/>
    </cofactor>
    <text evidence="2">Binds 1 2Fe-2S cluster.</text>
</comment>
<comment type="subunit">
    <text evidence="8">The propane 2-monooxygenase multicomponent enzyme system is composed of an electron transfer component and a monooxygenase component interacting with the effector protein PrmD. The electron transfer component is composed of a reductase (PrmB), and the monooxygenase component is formed by a large subunit (PrmA) and a small subunit (PrmC).</text>
</comment>
<comment type="induction">
    <text evidence="4 5">By propane and acetone.</text>
</comment>
<comment type="disruption phenotype">
    <text evidence="4 5">Cells lacking this gene are unable to grow on propane and to catalyze the oxidation of phenol to yield hydroquinone.</text>
</comment>
<comment type="similarity">
    <text evidence="7">Belongs to the bacterial ring-hydroxylating dioxygenase ferredoxin reductase family.</text>
</comment>
<comment type="sequence caution" evidence="7">
    <conflict type="frameshift">
        <sequence resource="EMBL-CDS" id="BAD03957"/>
    </conflict>
</comment>
<proteinExistence type="evidence at protein level"/>
<dbReference type="EC" id="1.18.1.-" evidence="7"/>
<dbReference type="EMBL" id="AB112920">
    <property type="protein sequence ID" value="BAD03957.1"/>
    <property type="status" value="ALT_FRAME"/>
    <property type="molecule type" value="Genomic_DNA"/>
</dbReference>
<dbReference type="SMR" id="Q768T4"/>
<dbReference type="BioCyc" id="MetaCyc:MONOMER-19808"/>
<dbReference type="BRENDA" id="1.14.13.227">
    <property type="organism ID" value="7737"/>
</dbReference>
<dbReference type="GO" id="GO:0051537">
    <property type="term" value="F:2 iron, 2 sulfur cluster binding"/>
    <property type="evidence" value="ECO:0007669"/>
    <property type="project" value="UniProtKB-KW"/>
</dbReference>
<dbReference type="GO" id="GO:0046872">
    <property type="term" value="F:metal ion binding"/>
    <property type="evidence" value="ECO:0007669"/>
    <property type="project" value="UniProtKB-KW"/>
</dbReference>
<dbReference type="GO" id="GO:0016491">
    <property type="term" value="F:oxidoreductase activity"/>
    <property type="evidence" value="ECO:0007669"/>
    <property type="project" value="UniProtKB-KW"/>
</dbReference>
<dbReference type="CDD" id="cd00207">
    <property type="entry name" value="fer2"/>
    <property type="match status" value="1"/>
</dbReference>
<dbReference type="CDD" id="cd06212">
    <property type="entry name" value="monooxygenase_like"/>
    <property type="match status" value="1"/>
</dbReference>
<dbReference type="Gene3D" id="3.10.20.30">
    <property type="match status" value="1"/>
</dbReference>
<dbReference type="Gene3D" id="3.40.50.80">
    <property type="entry name" value="Nucleotide-binding domain of ferredoxin-NADP reductase (FNR) module"/>
    <property type="match status" value="1"/>
</dbReference>
<dbReference type="Gene3D" id="2.40.30.10">
    <property type="entry name" value="Translation factors"/>
    <property type="match status" value="1"/>
</dbReference>
<dbReference type="InterPro" id="IPR036010">
    <property type="entry name" value="2Fe-2S_ferredoxin-like_sf"/>
</dbReference>
<dbReference type="InterPro" id="IPR001041">
    <property type="entry name" value="2Fe-2S_ferredoxin-type"/>
</dbReference>
<dbReference type="InterPro" id="IPR012675">
    <property type="entry name" value="Beta-grasp_dom_sf"/>
</dbReference>
<dbReference type="InterPro" id="IPR008333">
    <property type="entry name" value="Cbr1-like_FAD-bd_dom"/>
</dbReference>
<dbReference type="InterPro" id="IPR017927">
    <property type="entry name" value="FAD-bd_FR_type"/>
</dbReference>
<dbReference type="InterPro" id="IPR039261">
    <property type="entry name" value="FNR_nucleotide-bd"/>
</dbReference>
<dbReference type="InterPro" id="IPR050415">
    <property type="entry name" value="MRET"/>
</dbReference>
<dbReference type="InterPro" id="IPR001433">
    <property type="entry name" value="OxRdtase_FAD/NAD-bd"/>
</dbReference>
<dbReference type="InterPro" id="IPR017938">
    <property type="entry name" value="Riboflavin_synthase-like_b-brl"/>
</dbReference>
<dbReference type="PANTHER" id="PTHR47354">
    <property type="entry name" value="NADH OXIDOREDUCTASE HCR"/>
    <property type="match status" value="1"/>
</dbReference>
<dbReference type="PANTHER" id="PTHR47354:SF5">
    <property type="entry name" value="PROTEIN RFBI"/>
    <property type="match status" value="1"/>
</dbReference>
<dbReference type="Pfam" id="PF00970">
    <property type="entry name" value="FAD_binding_6"/>
    <property type="match status" value="1"/>
</dbReference>
<dbReference type="Pfam" id="PF00111">
    <property type="entry name" value="Fer2"/>
    <property type="match status" value="1"/>
</dbReference>
<dbReference type="Pfam" id="PF00175">
    <property type="entry name" value="NAD_binding_1"/>
    <property type="match status" value="1"/>
</dbReference>
<dbReference type="PRINTS" id="PR00410">
    <property type="entry name" value="PHEHYDRXLASE"/>
</dbReference>
<dbReference type="SUPFAM" id="SSF54292">
    <property type="entry name" value="2Fe-2S ferredoxin-like"/>
    <property type="match status" value="1"/>
</dbReference>
<dbReference type="SUPFAM" id="SSF52343">
    <property type="entry name" value="Ferredoxin reductase-like, C-terminal NADP-linked domain"/>
    <property type="match status" value="1"/>
</dbReference>
<dbReference type="SUPFAM" id="SSF63380">
    <property type="entry name" value="Riboflavin synthase domain-like"/>
    <property type="match status" value="1"/>
</dbReference>
<dbReference type="PROSITE" id="PS51085">
    <property type="entry name" value="2FE2S_FER_2"/>
    <property type="match status" value="1"/>
</dbReference>
<dbReference type="PROSITE" id="PS51384">
    <property type="entry name" value="FAD_FR"/>
    <property type="match status" value="1"/>
</dbReference>
<name>PRMB_GORST</name>
<gene>
    <name evidence="6" type="primary">prmB</name>
</gene>
<protein>
    <recommendedName>
        <fullName evidence="6">Propane 2-monooxygenase, reductase component</fullName>
        <shortName evidence="6">Prm</shortName>
        <ecNumber evidence="7">1.18.1.-</ecNumber>
    </recommendedName>
</protein>
<accession>Q768T4</accession>
<evidence type="ECO:0000250" key="1">
    <source>
        <dbReference type="UniProtKB" id="Q03304"/>
    </source>
</evidence>
<evidence type="ECO:0000255" key="2">
    <source>
        <dbReference type="PROSITE-ProRule" id="PRU00465"/>
    </source>
</evidence>
<evidence type="ECO:0000255" key="3">
    <source>
        <dbReference type="PROSITE-ProRule" id="PRU00716"/>
    </source>
</evidence>
<evidence type="ECO:0000269" key="4">
    <source>
    </source>
</evidence>
<evidence type="ECO:0000269" key="5">
    <source>
    </source>
</evidence>
<evidence type="ECO:0000303" key="6">
    <source>
    </source>
</evidence>
<evidence type="ECO:0000305" key="7"/>
<evidence type="ECO:0000305" key="8">
    <source>
    </source>
</evidence>
<evidence type="ECO:0000312" key="9">
    <source>
        <dbReference type="EMBL" id="BAD03957.1"/>
    </source>
</evidence>